<proteinExistence type="inferred from homology"/>
<sequence length="158" mass="17699">MLSPKRVKFRKQQRGRMRGVATRGNTIAFGEFALQAQECGWITSRQIEASRRAMTRYVKRGGKIWIRIFPDKPVTMRPAETRMGSGKGNPEFWVAVIKPGRILFEMGGAEITEDIAKEAMRLAQYKLPIKTKFIGLDDQEKVAGSDKPASVPAITAES</sequence>
<feature type="chain" id="PRO_0000062168" description="Large ribosomal subunit protein uL16">
    <location>
        <begin position="1"/>
        <end position="158"/>
    </location>
</feature>
<accession>Q7V536</accession>
<comment type="function">
    <text evidence="1">Binds 23S rRNA and is also seen to make contacts with the A and possibly P site tRNAs.</text>
</comment>
<comment type="subunit">
    <text evidence="1">Part of the 50S ribosomal subunit.</text>
</comment>
<comment type="similarity">
    <text evidence="1">Belongs to the universal ribosomal protein uL16 family.</text>
</comment>
<name>RL16_PROMM</name>
<protein>
    <recommendedName>
        <fullName evidence="1">Large ribosomal subunit protein uL16</fullName>
    </recommendedName>
    <alternativeName>
        <fullName evidence="2">50S ribosomal protein L16</fullName>
    </alternativeName>
</protein>
<dbReference type="EMBL" id="BX548175">
    <property type="protein sequence ID" value="CAE21914.1"/>
    <property type="molecule type" value="Genomic_DNA"/>
</dbReference>
<dbReference type="RefSeq" id="WP_011131106.1">
    <property type="nucleotide sequence ID" value="NC_005071.1"/>
</dbReference>
<dbReference type="SMR" id="Q7V536"/>
<dbReference type="KEGG" id="pmt:PMT_1739"/>
<dbReference type="eggNOG" id="COG0197">
    <property type="taxonomic scope" value="Bacteria"/>
</dbReference>
<dbReference type="HOGENOM" id="CLU_078858_2_1_3"/>
<dbReference type="OrthoDB" id="9802589at2"/>
<dbReference type="Proteomes" id="UP000001423">
    <property type="component" value="Chromosome"/>
</dbReference>
<dbReference type="GO" id="GO:1990904">
    <property type="term" value="C:ribonucleoprotein complex"/>
    <property type="evidence" value="ECO:0007669"/>
    <property type="project" value="UniProtKB-KW"/>
</dbReference>
<dbReference type="GO" id="GO:0005840">
    <property type="term" value="C:ribosome"/>
    <property type="evidence" value="ECO:0007669"/>
    <property type="project" value="UniProtKB-KW"/>
</dbReference>
<dbReference type="GO" id="GO:0019843">
    <property type="term" value="F:rRNA binding"/>
    <property type="evidence" value="ECO:0007669"/>
    <property type="project" value="UniProtKB-UniRule"/>
</dbReference>
<dbReference type="GO" id="GO:0003735">
    <property type="term" value="F:structural constituent of ribosome"/>
    <property type="evidence" value="ECO:0007669"/>
    <property type="project" value="InterPro"/>
</dbReference>
<dbReference type="GO" id="GO:0000049">
    <property type="term" value="F:tRNA binding"/>
    <property type="evidence" value="ECO:0007669"/>
    <property type="project" value="UniProtKB-KW"/>
</dbReference>
<dbReference type="GO" id="GO:0006412">
    <property type="term" value="P:translation"/>
    <property type="evidence" value="ECO:0007669"/>
    <property type="project" value="UniProtKB-UniRule"/>
</dbReference>
<dbReference type="CDD" id="cd01433">
    <property type="entry name" value="Ribosomal_L16_L10e"/>
    <property type="match status" value="1"/>
</dbReference>
<dbReference type="FunFam" id="3.90.1170.10:FF:000001">
    <property type="entry name" value="50S ribosomal protein L16"/>
    <property type="match status" value="1"/>
</dbReference>
<dbReference type="Gene3D" id="3.90.1170.10">
    <property type="entry name" value="Ribosomal protein L10e/L16"/>
    <property type="match status" value="1"/>
</dbReference>
<dbReference type="HAMAP" id="MF_01342">
    <property type="entry name" value="Ribosomal_uL16"/>
    <property type="match status" value="1"/>
</dbReference>
<dbReference type="InterPro" id="IPR047873">
    <property type="entry name" value="Ribosomal_uL16"/>
</dbReference>
<dbReference type="InterPro" id="IPR000114">
    <property type="entry name" value="Ribosomal_uL16_bact-type"/>
</dbReference>
<dbReference type="InterPro" id="IPR020798">
    <property type="entry name" value="Ribosomal_uL16_CS"/>
</dbReference>
<dbReference type="InterPro" id="IPR016180">
    <property type="entry name" value="Ribosomal_uL16_dom"/>
</dbReference>
<dbReference type="InterPro" id="IPR036920">
    <property type="entry name" value="Ribosomal_uL16_sf"/>
</dbReference>
<dbReference type="NCBIfam" id="TIGR01164">
    <property type="entry name" value="rplP_bact"/>
    <property type="match status" value="1"/>
</dbReference>
<dbReference type="PANTHER" id="PTHR12220">
    <property type="entry name" value="50S/60S RIBOSOMAL PROTEIN L16"/>
    <property type="match status" value="1"/>
</dbReference>
<dbReference type="PANTHER" id="PTHR12220:SF13">
    <property type="entry name" value="LARGE RIBOSOMAL SUBUNIT PROTEIN UL16M"/>
    <property type="match status" value="1"/>
</dbReference>
<dbReference type="Pfam" id="PF00252">
    <property type="entry name" value="Ribosomal_L16"/>
    <property type="match status" value="1"/>
</dbReference>
<dbReference type="PRINTS" id="PR00060">
    <property type="entry name" value="RIBOSOMALL16"/>
</dbReference>
<dbReference type="SUPFAM" id="SSF54686">
    <property type="entry name" value="Ribosomal protein L16p/L10e"/>
    <property type="match status" value="1"/>
</dbReference>
<dbReference type="PROSITE" id="PS00586">
    <property type="entry name" value="RIBOSOMAL_L16_1"/>
    <property type="match status" value="1"/>
</dbReference>
<dbReference type="PROSITE" id="PS00701">
    <property type="entry name" value="RIBOSOMAL_L16_2"/>
    <property type="match status" value="1"/>
</dbReference>
<gene>
    <name evidence="1" type="primary">rplP</name>
    <name evidence="1" type="synonym">rpl16</name>
    <name type="ordered locus">PMT_1739</name>
</gene>
<reference key="1">
    <citation type="journal article" date="2003" name="Nature">
        <title>Genome divergence in two Prochlorococcus ecotypes reflects oceanic niche differentiation.</title>
        <authorList>
            <person name="Rocap G."/>
            <person name="Larimer F.W."/>
            <person name="Lamerdin J.E."/>
            <person name="Malfatti S."/>
            <person name="Chain P."/>
            <person name="Ahlgren N.A."/>
            <person name="Arellano A."/>
            <person name="Coleman M."/>
            <person name="Hauser L."/>
            <person name="Hess W.R."/>
            <person name="Johnson Z.I."/>
            <person name="Land M.L."/>
            <person name="Lindell D."/>
            <person name="Post A.F."/>
            <person name="Regala W."/>
            <person name="Shah M."/>
            <person name="Shaw S.L."/>
            <person name="Steglich C."/>
            <person name="Sullivan M.B."/>
            <person name="Ting C.S."/>
            <person name="Tolonen A."/>
            <person name="Webb E.A."/>
            <person name="Zinser E.R."/>
            <person name="Chisholm S.W."/>
        </authorList>
    </citation>
    <scope>NUCLEOTIDE SEQUENCE [LARGE SCALE GENOMIC DNA]</scope>
    <source>
        <strain>MIT 9313</strain>
    </source>
</reference>
<organism>
    <name type="scientific">Prochlorococcus marinus (strain MIT 9313)</name>
    <dbReference type="NCBI Taxonomy" id="74547"/>
    <lineage>
        <taxon>Bacteria</taxon>
        <taxon>Bacillati</taxon>
        <taxon>Cyanobacteriota</taxon>
        <taxon>Cyanophyceae</taxon>
        <taxon>Synechococcales</taxon>
        <taxon>Prochlorococcaceae</taxon>
        <taxon>Prochlorococcus</taxon>
    </lineage>
</organism>
<evidence type="ECO:0000255" key="1">
    <source>
        <dbReference type="HAMAP-Rule" id="MF_01342"/>
    </source>
</evidence>
<evidence type="ECO:0000305" key="2"/>
<keyword id="KW-1185">Reference proteome</keyword>
<keyword id="KW-0687">Ribonucleoprotein</keyword>
<keyword id="KW-0689">Ribosomal protein</keyword>
<keyword id="KW-0694">RNA-binding</keyword>
<keyword id="KW-0699">rRNA-binding</keyword>
<keyword id="KW-0820">tRNA-binding</keyword>